<name>AROD5_ARATH</name>
<keyword id="KW-0028">Amino-acid biosynthesis</keyword>
<keyword id="KW-0057">Aromatic amino acid biosynthesis</keyword>
<keyword id="KW-0150">Chloroplast</keyword>
<keyword id="KW-0456">Lyase</keyword>
<keyword id="KW-0584">Phenylalanine biosynthesis</keyword>
<keyword id="KW-0934">Plastid</keyword>
<keyword id="KW-1185">Reference proteome</keyword>
<keyword id="KW-0809">Transit peptide</keyword>
<sequence>MQTISPAFSCDLKSVIQPNLTAKKARYSHVNGKRVSVRCSYRSESFSFPNGVGSSRADWQSSCAILASKVVSAENSSSVAVVNGHSNGSVDLSLVPSKSQHNGKPGLIQPLTITDLSPAPSHGSTLRVAYQGVPGAYSEAAAGKAYPNSEAIPCDQFDVAFQAVELWIADRAVLPVENSLGGSIHRNYDLLLRHRLHIVGEVQIPVHHCLLALPGVRTDCITRVISHPQALAQTEGSLNKLTPKAAIEAFHDTAAAAEYIAANNLHDTAAVASARAAELYGLQILADGIQDDAGNVTRFLMLARDPIIPRTDRPFKTSIVFAAQEHKGTSVLFKVLSAFAFRNISLTKIESRPHQNCPVRVVGDENVGTSKHFEYTFYVDFEASMAEARAQNALAEVQEYTSFLRVLGSYPMDMTPWSTLPSEDV</sequence>
<feature type="transit peptide" description="Chloroplast" evidence="1">
    <location>
        <begin position="1"/>
        <end position="38"/>
    </location>
</feature>
<feature type="chain" id="PRO_0000373794" description="Arogenate dehydratase 5, chloroplastic">
    <location>
        <begin position="39"/>
        <end position="425"/>
    </location>
</feature>
<feature type="domain" description="Prephenate dehydratase" evidence="2">
    <location>
        <begin position="127"/>
        <end position="304"/>
    </location>
</feature>
<feature type="domain" description="ACT" evidence="3">
    <location>
        <begin position="320"/>
        <end position="411"/>
    </location>
</feature>
<gene>
    <name evidence="7" type="primary">ADT5</name>
    <name evidence="8" type="ordered locus">At5g22630</name>
    <name evidence="9" type="ORF">MDJ22.5</name>
</gene>
<comment type="function">
    <text evidence="5">Converts the prephenate produced from the shikimate-chorismate pathway into phenylalanine.</text>
</comment>
<comment type="catalytic activity">
    <reaction evidence="5">
        <text>L-arogenate + H(+) = L-phenylalanine + CO2 + H2O</text>
        <dbReference type="Rhea" id="RHEA:12536"/>
        <dbReference type="ChEBI" id="CHEBI:15377"/>
        <dbReference type="ChEBI" id="CHEBI:15378"/>
        <dbReference type="ChEBI" id="CHEBI:16526"/>
        <dbReference type="ChEBI" id="CHEBI:58095"/>
        <dbReference type="ChEBI" id="CHEBI:58180"/>
        <dbReference type="EC" id="4.2.1.91"/>
    </reaction>
</comment>
<comment type="biophysicochemical properties">
    <kinetics>
        <KM evidence="5">1.72 mM for arogenate</KM>
        <Vmax evidence="5">11.26 pmol/sec/ug enzyme with arogenate as substrate</Vmax>
    </kinetics>
</comment>
<comment type="pathway">
    <text evidence="5">Amino-acid biosynthesis; L-phenylalanine biosynthesis; L-phenylalanine from L-arogenate: step 1/1.</text>
</comment>
<comment type="subcellular location">
    <subcellularLocation>
        <location evidence="6">Plastid</location>
        <location evidence="6">Chloroplast stroma</location>
    </subcellularLocation>
</comment>
<comment type="tissue specificity">
    <text evidence="5">Expressed in roots, leaves, stems, flowers and siliques. More abundant in stems and roots.</text>
</comment>
<comment type="induction">
    <text evidence="4">Strongly up-regulated during stem elongation.</text>
</comment>
<comment type="miscellaneous">
    <text>Has no detectable prehenate dehydratase activity.</text>
</comment>
<protein>
    <recommendedName>
        <fullName evidence="7">Arogenate dehydratase 5, chloroplastic</fullName>
        <shortName evidence="7">AtADT5</shortName>
        <ecNumber evidence="5">4.2.1.91</ecNumber>
    </recommendedName>
</protein>
<evidence type="ECO:0000255" key="1"/>
<evidence type="ECO:0000255" key="2">
    <source>
        <dbReference type="PROSITE-ProRule" id="PRU00517"/>
    </source>
</evidence>
<evidence type="ECO:0000255" key="3">
    <source>
        <dbReference type="PROSITE-ProRule" id="PRU01007"/>
    </source>
</evidence>
<evidence type="ECO:0000269" key="4">
    <source>
    </source>
</evidence>
<evidence type="ECO:0000269" key="5">
    <source>
    </source>
</evidence>
<evidence type="ECO:0000269" key="6">
    <source>
    </source>
</evidence>
<evidence type="ECO:0000303" key="7">
    <source>
    </source>
</evidence>
<evidence type="ECO:0000312" key="8">
    <source>
        <dbReference type="Araport" id="AT5G22630"/>
    </source>
</evidence>
<evidence type="ECO:0000312" key="9">
    <source>
        <dbReference type="EMBL" id="BAB11669.1"/>
    </source>
</evidence>
<reference key="1">
    <citation type="submission" date="2006-02" db="EMBL/GenBank/DDBJ databases">
        <authorList>
            <person name="Matringe M."/>
            <person name="Grisollet D."/>
            <person name="Rippert P."/>
        </authorList>
    </citation>
    <scope>NUCLEOTIDE SEQUENCE [MRNA]</scope>
    <source>
        <strain>cv. Columbia</strain>
    </source>
</reference>
<reference key="2">
    <citation type="journal article" date="1997" name="DNA Res.">
        <title>Structural analysis of Arabidopsis thaliana chromosome 5. II. Sequence features of the regions of 1,044,062 bp covered by thirteen physically assigned P1 clones.</title>
        <authorList>
            <person name="Kotani H."/>
            <person name="Nakamura Y."/>
            <person name="Sato S."/>
            <person name="Kaneko T."/>
            <person name="Asamizu E."/>
            <person name="Miyajima N."/>
            <person name="Tabata S."/>
        </authorList>
    </citation>
    <scope>NUCLEOTIDE SEQUENCE [LARGE SCALE GENOMIC DNA]</scope>
    <source>
        <strain>cv. Columbia</strain>
    </source>
</reference>
<reference key="3">
    <citation type="journal article" date="2017" name="Plant J.">
        <title>Araport11: a complete reannotation of the Arabidopsis thaliana reference genome.</title>
        <authorList>
            <person name="Cheng C.Y."/>
            <person name="Krishnakumar V."/>
            <person name="Chan A.P."/>
            <person name="Thibaud-Nissen F."/>
            <person name="Schobel S."/>
            <person name="Town C.D."/>
        </authorList>
    </citation>
    <scope>GENOME REANNOTATION</scope>
    <source>
        <strain>cv. Columbia</strain>
    </source>
</reference>
<reference key="4">
    <citation type="journal article" date="2003" name="Science">
        <title>Empirical analysis of transcriptional activity in the Arabidopsis genome.</title>
        <authorList>
            <person name="Yamada K."/>
            <person name="Lim J."/>
            <person name="Dale J.M."/>
            <person name="Chen H."/>
            <person name="Shinn P."/>
            <person name="Palm C.J."/>
            <person name="Southwick A.M."/>
            <person name="Wu H.C."/>
            <person name="Kim C.J."/>
            <person name="Nguyen M."/>
            <person name="Pham P.K."/>
            <person name="Cheuk R.F."/>
            <person name="Karlin-Newmann G."/>
            <person name="Liu S.X."/>
            <person name="Lam B."/>
            <person name="Sakano H."/>
            <person name="Wu T."/>
            <person name="Yu G."/>
            <person name="Miranda M."/>
            <person name="Quach H.L."/>
            <person name="Tripp M."/>
            <person name="Chang C.H."/>
            <person name="Lee J.M."/>
            <person name="Toriumi M.J."/>
            <person name="Chan M.M."/>
            <person name="Tang C.C."/>
            <person name="Onodera C.S."/>
            <person name="Deng J.M."/>
            <person name="Akiyama K."/>
            <person name="Ansari Y."/>
            <person name="Arakawa T."/>
            <person name="Banh J."/>
            <person name="Banno F."/>
            <person name="Bowser L."/>
            <person name="Brooks S.Y."/>
            <person name="Carninci P."/>
            <person name="Chao Q."/>
            <person name="Choy N."/>
            <person name="Enju A."/>
            <person name="Goldsmith A.D."/>
            <person name="Gurjal M."/>
            <person name="Hansen N.F."/>
            <person name="Hayashizaki Y."/>
            <person name="Johnson-Hopson C."/>
            <person name="Hsuan V.W."/>
            <person name="Iida K."/>
            <person name="Karnes M."/>
            <person name="Khan S."/>
            <person name="Koesema E."/>
            <person name="Ishida J."/>
            <person name="Jiang P.X."/>
            <person name="Jones T."/>
            <person name="Kawai J."/>
            <person name="Kamiya A."/>
            <person name="Meyers C."/>
            <person name="Nakajima M."/>
            <person name="Narusaka M."/>
            <person name="Seki M."/>
            <person name="Sakurai T."/>
            <person name="Satou M."/>
            <person name="Tamse R."/>
            <person name="Vaysberg M."/>
            <person name="Wallender E.K."/>
            <person name="Wong C."/>
            <person name="Yamamura Y."/>
            <person name="Yuan S."/>
            <person name="Shinozaki K."/>
            <person name="Davis R.W."/>
            <person name="Theologis A."/>
            <person name="Ecker J.R."/>
        </authorList>
    </citation>
    <scope>NUCLEOTIDE SEQUENCE [LARGE SCALE MRNA]</scope>
    <source>
        <strain>cv. Columbia</strain>
    </source>
</reference>
<reference key="5">
    <citation type="journal article" date="2005" name="Plant J.">
        <title>Global transcript profiling of primary stems from Arabidopsis thaliana identifies candidate genes for missing links in lignin biosynthesis and transcriptional regulators of fiber differentiation.</title>
        <authorList>
            <person name="Ehlting J."/>
            <person name="Mattheus N."/>
            <person name="Aeschliman D.S."/>
            <person name="Li E."/>
            <person name="Hamberger B."/>
            <person name="Cullis I.F."/>
            <person name="Zhuang J."/>
            <person name="Kaneda M."/>
            <person name="Mansfield S.D."/>
            <person name="Samuels L."/>
            <person name="Ritland K."/>
            <person name="Ellis B.E."/>
            <person name="Bohlmann J."/>
            <person name="Douglas C.J."/>
        </authorList>
    </citation>
    <scope>INDUCTION</scope>
</reference>
<reference key="6">
    <citation type="journal article" date="2007" name="J. Biol. Chem.">
        <title>Phenylalanine biosynthesis in Arabidopsis thaliana. Identification and characterization of arogenate dehydratases.</title>
        <authorList>
            <person name="Cho M.-H."/>
            <person name="Corea O.R.A."/>
            <person name="Yang H."/>
            <person name="Bedgar D.L."/>
            <person name="Laskar D.D."/>
            <person name="Anterola A.M."/>
            <person name="Moog-Anterola F.A."/>
            <person name="Hood R.L."/>
            <person name="Kohalmi S.E."/>
            <person name="Bernards M.A."/>
            <person name="Kang C."/>
            <person name="Davin L.B."/>
            <person name="Lewis N.G."/>
        </authorList>
    </citation>
    <scope>FUNCTION</scope>
    <scope>CATALYTIC ACTIVITY</scope>
    <scope>PATHWAY</scope>
    <scope>TISSUE SPECIFICITY</scope>
    <scope>BIOPHYSICOCHEMICAL PROPERTIES</scope>
</reference>
<reference key="7">
    <citation type="journal article" date="2009" name="Plant Physiol.">
        <title>Tyrosine and phenylalanine are synthesized within the plastids in Arabidopsis.</title>
        <authorList>
            <person name="Rippert P."/>
            <person name="Puyaubert J."/>
            <person name="Grisollet D."/>
            <person name="Derrier L."/>
            <person name="Matringe M."/>
        </authorList>
    </citation>
    <scope>SUBCELLULAR LOCATION</scope>
</reference>
<dbReference type="EC" id="4.2.1.91" evidence="5"/>
<dbReference type="EMBL" id="DQ411469">
    <property type="protein sequence ID" value="ABD67755.1"/>
    <property type="molecule type" value="mRNA"/>
</dbReference>
<dbReference type="EMBL" id="AB006699">
    <property type="protein sequence ID" value="BAB11669.1"/>
    <property type="molecule type" value="Genomic_DNA"/>
</dbReference>
<dbReference type="EMBL" id="CP002688">
    <property type="protein sequence ID" value="AED93055.1"/>
    <property type="molecule type" value="Genomic_DNA"/>
</dbReference>
<dbReference type="EMBL" id="AY058097">
    <property type="protein sequence ID" value="AAL24205.1"/>
    <property type="molecule type" value="mRNA"/>
</dbReference>
<dbReference type="EMBL" id="AY090235">
    <property type="protein sequence ID" value="AAL90899.1"/>
    <property type="molecule type" value="mRNA"/>
</dbReference>
<dbReference type="EMBL" id="AY149958">
    <property type="protein sequence ID" value="AAN31112.1"/>
    <property type="molecule type" value="mRNA"/>
</dbReference>
<dbReference type="RefSeq" id="NP_197655.1">
    <property type="nucleotide sequence ID" value="NM_122169.3"/>
</dbReference>
<dbReference type="SMR" id="Q9FNJ8"/>
<dbReference type="BioGRID" id="17601">
    <property type="interactions" value="5"/>
</dbReference>
<dbReference type="FunCoup" id="Q9FNJ8">
    <property type="interactions" value="341"/>
</dbReference>
<dbReference type="IntAct" id="Q9FNJ8">
    <property type="interactions" value="5"/>
</dbReference>
<dbReference type="STRING" id="3702.Q9FNJ8"/>
<dbReference type="MoonProt" id="Q9FNJ8"/>
<dbReference type="PaxDb" id="3702-AT5G22630.1"/>
<dbReference type="ProteomicsDB" id="246781"/>
<dbReference type="EnsemblPlants" id="AT5G22630.1">
    <property type="protein sequence ID" value="AT5G22630.1"/>
    <property type="gene ID" value="AT5G22630"/>
</dbReference>
<dbReference type="GeneID" id="832326"/>
<dbReference type="Gramene" id="AT5G22630.1">
    <property type="protein sequence ID" value="AT5G22630.1"/>
    <property type="gene ID" value="AT5G22630"/>
</dbReference>
<dbReference type="KEGG" id="ath:AT5G22630"/>
<dbReference type="Araport" id="AT5G22630"/>
<dbReference type="TAIR" id="AT5G22630">
    <property type="gene designation" value="ADT5"/>
</dbReference>
<dbReference type="eggNOG" id="KOG2797">
    <property type="taxonomic scope" value="Eukaryota"/>
</dbReference>
<dbReference type="HOGENOM" id="CLU_035008_4_1_1"/>
<dbReference type="InParanoid" id="Q9FNJ8"/>
<dbReference type="OMA" id="PMDMAPW"/>
<dbReference type="OrthoDB" id="2414662at2759"/>
<dbReference type="PhylomeDB" id="Q9FNJ8"/>
<dbReference type="BioCyc" id="ARA:AT5G22630-MONOMER"/>
<dbReference type="BRENDA" id="4.2.1.91">
    <property type="organism ID" value="399"/>
</dbReference>
<dbReference type="SABIO-RK" id="Q9FNJ8"/>
<dbReference type="UniPathway" id="UPA00121">
    <property type="reaction ID" value="UER00344"/>
</dbReference>
<dbReference type="PRO" id="PR:Q9FNJ8"/>
<dbReference type="Proteomes" id="UP000006548">
    <property type="component" value="Chromosome 5"/>
</dbReference>
<dbReference type="ExpressionAtlas" id="Q9FNJ8">
    <property type="expression patterns" value="baseline and differential"/>
</dbReference>
<dbReference type="GO" id="GO:0009507">
    <property type="term" value="C:chloroplast"/>
    <property type="evidence" value="ECO:0000314"/>
    <property type="project" value="TAIR"/>
</dbReference>
<dbReference type="GO" id="GO:0009570">
    <property type="term" value="C:chloroplast stroma"/>
    <property type="evidence" value="ECO:0007669"/>
    <property type="project" value="UniProtKB-SubCell"/>
</dbReference>
<dbReference type="GO" id="GO:0047769">
    <property type="term" value="F:arogenate dehydratase activity"/>
    <property type="evidence" value="ECO:0000314"/>
    <property type="project" value="TAIR"/>
</dbReference>
<dbReference type="GO" id="GO:0004664">
    <property type="term" value="F:prephenate dehydratase activity"/>
    <property type="evidence" value="ECO:0007669"/>
    <property type="project" value="InterPro"/>
</dbReference>
<dbReference type="GO" id="GO:0006952">
    <property type="term" value="P:defense response"/>
    <property type="evidence" value="ECO:0000270"/>
    <property type="project" value="TAIR"/>
</dbReference>
<dbReference type="GO" id="GO:0009094">
    <property type="term" value="P:L-phenylalanine biosynthetic process"/>
    <property type="evidence" value="ECO:0007669"/>
    <property type="project" value="UniProtKB-UniPathway"/>
</dbReference>
<dbReference type="CDD" id="cd04905">
    <property type="entry name" value="ACT_CM-PDT"/>
    <property type="match status" value="1"/>
</dbReference>
<dbReference type="CDD" id="cd13631">
    <property type="entry name" value="PBP2_Ct-PDT_like"/>
    <property type="match status" value="1"/>
</dbReference>
<dbReference type="FunFam" id="3.30.70.260:FF:000019">
    <property type="entry name" value="Arogenate dehydratase"/>
    <property type="match status" value="1"/>
</dbReference>
<dbReference type="FunFam" id="3.40.190.10:FF:000028">
    <property type="entry name" value="Arogenate dehydratase"/>
    <property type="match status" value="1"/>
</dbReference>
<dbReference type="FunFam" id="3.40.190.10:FF:000031">
    <property type="entry name" value="Arogenate dehydratase"/>
    <property type="match status" value="1"/>
</dbReference>
<dbReference type="Gene3D" id="3.30.70.260">
    <property type="match status" value="1"/>
</dbReference>
<dbReference type="Gene3D" id="3.40.190.10">
    <property type="entry name" value="Periplasmic binding protein-like II"/>
    <property type="match status" value="2"/>
</dbReference>
<dbReference type="InterPro" id="IPR045865">
    <property type="entry name" value="ACT-like_dom_sf"/>
</dbReference>
<dbReference type="InterPro" id="IPR002912">
    <property type="entry name" value="ACT_dom"/>
</dbReference>
<dbReference type="InterPro" id="IPR001086">
    <property type="entry name" value="Preph_deHydtase"/>
</dbReference>
<dbReference type="InterPro" id="IPR018528">
    <property type="entry name" value="Preph_deHydtase_CS"/>
</dbReference>
<dbReference type="PANTHER" id="PTHR21022:SF21">
    <property type="entry name" value="AROGENATE DEHYDRATASE 5, CHLOROPLASTIC"/>
    <property type="match status" value="1"/>
</dbReference>
<dbReference type="PANTHER" id="PTHR21022">
    <property type="entry name" value="PREPHENATE DEHYDRATASE P PROTEIN"/>
    <property type="match status" value="1"/>
</dbReference>
<dbReference type="Pfam" id="PF00800">
    <property type="entry name" value="PDT"/>
    <property type="match status" value="1"/>
</dbReference>
<dbReference type="SUPFAM" id="SSF55021">
    <property type="entry name" value="ACT-like"/>
    <property type="match status" value="1"/>
</dbReference>
<dbReference type="SUPFAM" id="SSF53850">
    <property type="entry name" value="Periplasmic binding protein-like II"/>
    <property type="match status" value="1"/>
</dbReference>
<dbReference type="PROSITE" id="PS51671">
    <property type="entry name" value="ACT"/>
    <property type="match status" value="1"/>
</dbReference>
<dbReference type="PROSITE" id="PS00857">
    <property type="entry name" value="PREPHENATE_DEHYDR_1"/>
    <property type="match status" value="1"/>
</dbReference>
<dbReference type="PROSITE" id="PS00858">
    <property type="entry name" value="PREPHENATE_DEHYDR_2"/>
    <property type="match status" value="1"/>
</dbReference>
<dbReference type="PROSITE" id="PS51171">
    <property type="entry name" value="PREPHENATE_DEHYDR_3"/>
    <property type="match status" value="1"/>
</dbReference>
<accession>Q9FNJ8</accession>
<organism>
    <name type="scientific">Arabidopsis thaliana</name>
    <name type="common">Mouse-ear cress</name>
    <dbReference type="NCBI Taxonomy" id="3702"/>
    <lineage>
        <taxon>Eukaryota</taxon>
        <taxon>Viridiplantae</taxon>
        <taxon>Streptophyta</taxon>
        <taxon>Embryophyta</taxon>
        <taxon>Tracheophyta</taxon>
        <taxon>Spermatophyta</taxon>
        <taxon>Magnoliopsida</taxon>
        <taxon>eudicotyledons</taxon>
        <taxon>Gunneridae</taxon>
        <taxon>Pentapetalae</taxon>
        <taxon>rosids</taxon>
        <taxon>malvids</taxon>
        <taxon>Brassicales</taxon>
        <taxon>Brassicaceae</taxon>
        <taxon>Camelineae</taxon>
        <taxon>Arabidopsis</taxon>
    </lineage>
</organism>
<proteinExistence type="evidence at protein level"/>